<evidence type="ECO:0000255" key="1">
    <source>
        <dbReference type="HAMAP-Rule" id="MF_00391"/>
    </source>
</evidence>
<evidence type="ECO:0000256" key="2">
    <source>
        <dbReference type="SAM" id="MobiDB-lite"/>
    </source>
</evidence>
<evidence type="ECO:0000305" key="3"/>
<reference key="1">
    <citation type="journal article" date="2007" name="J. Bacteriol.">
        <title>Genome of the opportunistic pathogen Streptococcus sanguinis.</title>
        <authorList>
            <person name="Xu P."/>
            <person name="Alves J.M."/>
            <person name="Kitten T."/>
            <person name="Brown A."/>
            <person name="Chen Z."/>
            <person name="Ozaki L.S."/>
            <person name="Manque P."/>
            <person name="Ge X."/>
            <person name="Serrano M.G."/>
            <person name="Puiu D."/>
            <person name="Hendricks S."/>
            <person name="Wang Y."/>
            <person name="Chaplin M.D."/>
            <person name="Akan D."/>
            <person name="Paik S."/>
            <person name="Peterson D.L."/>
            <person name="Macrina F.L."/>
            <person name="Buck G.A."/>
        </authorList>
    </citation>
    <scope>NUCLEOTIDE SEQUENCE [LARGE SCALE GENOMIC DNA]</scope>
    <source>
        <strain>SK36</strain>
    </source>
</reference>
<accession>A3CQP8</accession>
<dbReference type="EMBL" id="CP000387">
    <property type="protein sequence ID" value="ABN45503.1"/>
    <property type="molecule type" value="Genomic_DNA"/>
</dbReference>
<dbReference type="RefSeq" id="WP_002893904.1">
    <property type="nucleotide sequence ID" value="NZ_CAXTYR010000002.1"/>
</dbReference>
<dbReference type="RefSeq" id="YP_001036053.1">
    <property type="nucleotide sequence ID" value="NC_009009.1"/>
</dbReference>
<dbReference type="SMR" id="A3CQP8"/>
<dbReference type="STRING" id="388919.SSA_2136"/>
<dbReference type="GeneID" id="48424684"/>
<dbReference type="KEGG" id="ssa:SSA_2136"/>
<dbReference type="PATRIC" id="fig|388919.9.peg.2022"/>
<dbReference type="eggNOG" id="COG0230">
    <property type="taxonomic scope" value="Bacteria"/>
</dbReference>
<dbReference type="HOGENOM" id="CLU_129938_2_0_9"/>
<dbReference type="Proteomes" id="UP000002148">
    <property type="component" value="Chromosome"/>
</dbReference>
<dbReference type="GO" id="GO:1990904">
    <property type="term" value="C:ribonucleoprotein complex"/>
    <property type="evidence" value="ECO:0007669"/>
    <property type="project" value="UniProtKB-KW"/>
</dbReference>
<dbReference type="GO" id="GO:0005840">
    <property type="term" value="C:ribosome"/>
    <property type="evidence" value="ECO:0007669"/>
    <property type="project" value="UniProtKB-KW"/>
</dbReference>
<dbReference type="GO" id="GO:0003735">
    <property type="term" value="F:structural constituent of ribosome"/>
    <property type="evidence" value="ECO:0007669"/>
    <property type="project" value="InterPro"/>
</dbReference>
<dbReference type="GO" id="GO:0006412">
    <property type="term" value="P:translation"/>
    <property type="evidence" value="ECO:0007669"/>
    <property type="project" value="UniProtKB-UniRule"/>
</dbReference>
<dbReference type="FunFam" id="1.10.287.3980:FF:000001">
    <property type="entry name" value="Mitochondrial ribosomal protein L34"/>
    <property type="match status" value="1"/>
</dbReference>
<dbReference type="Gene3D" id="1.10.287.3980">
    <property type="match status" value="1"/>
</dbReference>
<dbReference type="HAMAP" id="MF_00391">
    <property type="entry name" value="Ribosomal_bL34"/>
    <property type="match status" value="1"/>
</dbReference>
<dbReference type="InterPro" id="IPR000271">
    <property type="entry name" value="Ribosomal_bL34"/>
</dbReference>
<dbReference type="InterPro" id="IPR020939">
    <property type="entry name" value="Ribosomal_bL34_CS"/>
</dbReference>
<dbReference type="NCBIfam" id="TIGR01030">
    <property type="entry name" value="rpmH_bact"/>
    <property type="match status" value="1"/>
</dbReference>
<dbReference type="PANTHER" id="PTHR14503:SF4">
    <property type="entry name" value="LARGE RIBOSOMAL SUBUNIT PROTEIN BL34M"/>
    <property type="match status" value="1"/>
</dbReference>
<dbReference type="PANTHER" id="PTHR14503">
    <property type="entry name" value="MITOCHONDRIAL RIBOSOMAL PROTEIN 34 FAMILY MEMBER"/>
    <property type="match status" value="1"/>
</dbReference>
<dbReference type="Pfam" id="PF00468">
    <property type="entry name" value="Ribosomal_L34"/>
    <property type="match status" value="1"/>
</dbReference>
<dbReference type="PROSITE" id="PS00784">
    <property type="entry name" value="RIBOSOMAL_L34"/>
    <property type="match status" value="1"/>
</dbReference>
<gene>
    <name evidence="1" type="primary">rpmH</name>
    <name type="ordered locus">SSA_2136</name>
</gene>
<comment type="similarity">
    <text evidence="1">Belongs to the bacterial ribosomal protein bL34 family.</text>
</comment>
<name>RL34_STRSV</name>
<feature type="chain" id="PRO_1000013470" description="Large ribosomal subunit protein bL34">
    <location>
        <begin position="1"/>
        <end position="44"/>
    </location>
</feature>
<feature type="region of interest" description="Disordered" evidence="2">
    <location>
        <begin position="1"/>
        <end position="44"/>
    </location>
</feature>
<proteinExistence type="inferred from homology"/>
<protein>
    <recommendedName>
        <fullName evidence="1">Large ribosomal subunit protein bL34</fullName>
    </recommendedName>
    <alternativeName>
        <fullName evidence="3">50S ribosomal protein L34</fullName>
    </alternativeName>
</protein>
<organism>
    <name type="scientific">Streptococcus sanguinis (strain SK36)</name>
    <dbReference type="NCBI Taxonomy" id="388919"/>
    <lineage>
        <taxon>Bacteria</taxon>
        <taxon>Bacillati</taxon>
        <taxon>Bacillota</taxon>
        <taxon>Bacilli</taxon>
        <taxon>Lactobacillales</taxon>
        <taxon>Streptococcaceae</taxon>
        <taxon>Streptococcus</taxon>
    </lineage>
</organism>
<sequence length="44" mass="5288">MKRTYQPSKIRRARKHGFRHRMSTKNGRRVLAARRRKGRKVLAA</sequence>
<keyword id="KW-1185">Reference proteome</keyword>
<keyword id="KW-0687">Ribonucleoprotein</keyword>
<keyword id="KW-0689">Ribosomal protein</keyword>